<comment type="function">
    <text evidence="1">Catalyzes the CTP-dependent phosphorylation of riboflavin (vitamin B2) to form flavin mononucleotide (FMN).</text>
</comment>
<comment type="catalytic activity">
    <reaction>
        <text>riboflavin + CTP = CDP + FMN + H(+)</text>
        <dbReference type="Rhea" id="RHEA:25021"/>
        <dbReference type="ChEBI" id="CHEBI:15378"/>
        <dbReference type="ChEBI" id="CHEBI:37563"/>
        <dbReference type="ChEBI" id="CHEBI:57986"/>
        <dbReference type="ChEBI" id="CHEBI:58069"/>
        <dbReference type="ChEBI" id="CHEBI:58210"/>
        <dbReference type="EC" id="2.7.1.161"/>
    </reaction>
</comment>
<comment type="cofactor">
    <cofactor evidence="1">
        <name>Mg(2+)</name>
        <dbReference type="ChEBI" id="CHEBI:18420"/>
    </cofactor>
    <text evidence="1">Binds 1 Mg(2+) ion per subunit.</text>
</comment>
<comment type="pathway">
    <text>Cofactor biosynthesis; FMN biosynthesis; FMN from riboflavin (CTP route): step 1/1.</text>
</comment>
<comment type="similarity">
    <text evidence="2">Belongs to the archaeal riboflavin kinase family.</text>
</comment>
<accession>A2STY4</accession>
<organism>
    <name type="scientific">Methanocorpusculum labreanum (strain ATCC 43576 / DSM 4855 / Z)</name>
    <dbReference type="NCBI Taxonomy" id="410358"/>
    <lineage>
        <taxon>Archaea</taxon>
        <taxon>Methanobacteriati</taxon>
        <taxon>Methanobacteriota</taxon>
        <taxon>Stenosarchaea group</taxon>
        <taxon>Methanomicrobia</taxon>
        <taxon>Methanomicrobiales</taxon>
        <taxon>Methanocorpusculaceae</taxon>
        <taxon>Methanocorpusculum</taxon>
    </lineage>
</organism>
<reference key="1">
    <citation type="journal article" date="2009" name="Stand. Genomic Sci.">
        <title>Complete genome sequence of Methanocorpusculum labreanum type strain Z.</title>
        <authorList>
            <person name="Anderson I.J."/>
            <person name="Sieprawska-Lupa M."/>
            <person name="Goltsman E."/>
            <person name="Lapidus A."/>
            <person name="Copeland A."/>
            <person name="Glavina Del Rio T."/>
            <person name="Tice H."/>
            <person name="Dalin E."/>
            <person name="Barry K."/>
            <person name="Pitluck S."/>
            <person name="Hauser L."/>
            <person name="Land M."/>
            <person name="Lucas S."/>
            <person name="Richardson P."/>
            <person name="Whitman W.B."/>
            <person name="Kyrpides N.C."/>
        </authorList>
    </citation>
    <scope>NUCLEOTIDE SEQUENCE [LARGE SCALE GENOMIC DNA]</scope>
    <source>
        <strain>ATCC 43576 / DSM 4855 / Z</strain>
    </source>
</reference>
<name>RIFK_METLZ</name>
<gene>
    <name type="primary">ribK</name>
    <name type="ordered locus">Mlab_1629</name>
</gene>
<sequence length="222" mass="24735">METIDAEDAACLRRIALLGGCKGPVRLSTQALGDQLGISQQTASRRLQSLEKAQMISRTAESTGQYVLVTRSGEEHLRREFAEYAKIFDVKDEQYVLTGTVMSGVGEGRYYMSIPHYQEQFEKLCGFTPYPGTLNIKLNPQSVLIRKRMDSLEWTIVPGFKDEHRMFGEARCIKCTISGIPCAIVVPGRTHHPEEVIEVISGTQLRDALDLTENSEVVVVIG</sequence>
<protein>
    <recommendedName>
        <fullName>Riboflavin kinase</fullName>
        <shortName>RFK</shortName>
        <ecNumber>2.7.1.161</ecNumber>
    </recommendedName>
    <alternativeName>
        <fullName>CTP-dependent riboflavin kinase</fullName>
    </alternativeName>
    <alternativeName>
        <fullName>CTP:riboflavin 5'-phosphotransferase</fullName>
    </alternativeName>
    <alternativeName>
        <fullName>Flavokinase</fullName>
    </alternativeName>
</protein>
<dbReference type="EC" id="2.7.1.161"/>
<dbReference type="EMBL" id="CP000559">
    <property type="protein sequence ID" value="ABN07790.1"/>
    <property type="molecule type" value="Genomic_DNA"/>
</dbReference>
<dbReference type="RefSeq" id="WP_011833993.1">
    <property type="nucleotide sequence ID" value="NC_008942.1"/>
</dbReference>
<dbReference type="SMR" id="A2STY4"/>
<dbReference type="STRING" id="410358.Mlab_1629"/>
<dbReference type="GeneID" id="4795257"/>
<dbReference type="KEGG" id="mla:Mlab_1629"/>
<dbReference type="eggNOG" id="arCOG01904">
    <property type="taxonomic scope" value="Archaea"/>
</dbReference>
<dbReference type="HOGENOM" id="CLU_088476_0_0_2"/>
<dbReference type="OrthoDB" id="30955at2157"/>
<dbReference type="UniPathway" id="UPA00276">
    <property type="reaction ID" value="UER00929"/>
</dbReference>
<dbReference type="Proteomes" id="UP000000365">
    <property type="component" value="Chromosome"/>
</dbReference>
<dbReference type="GO" id="GO:0000287">
    <property type="term" value="F:magnesium ion binding"/>
    <property type="evidence" value="ECO:0007669"/>
    <property type="project" value="UniProtKB-UniRule"/>
</dbReference>
<dbReference type="GO" id="GO:0000166">
    <property type="term" value="F:nucleotide binding"/>
    <property type="evidence" value="ECO:0007669"/>
    <property type="project" value="UniProtKB-UniRule"/>
</dbReference>
<dbReference type="GO" id="GO:0008531">
    <property type="term" value="F:riboflavin kinase activity"/>
    <property type="evidence" value="ECO:0007669"/>
    <property type="project" value="InterPro"/>
</dbReference>
<dbReference type="GO" id="GO:0009398">
    <property type="term" value="P:FMN biosynthetic process"/>
    <property type="evidence" value="ECO:0007669"/>
    <property type="project" value="UniProtKB-UniRule"/>
</dbReference>
<dbReference type="GO" id="GO:0009231">
    <property type="term" value="P:riboflavin biosynthetic process"/>
    <property type="evidence" value="ECO:0007669"/>
    <property type="project" value="InterPro"/>
</dbReference>
<dbReference type="CDD" id="cd00090">
    <property type="entry name" value="HTH_ARSR"/>
    <property type="match status" value="1"/>
</dbReference>
<dbReference type="Gene3D" id="2.40.30.30">
    <property type="entry name" value="Riboflavin kinase-like"/>
    <property type="match status" value="1"/>
</dbReference>
<dbReference type="Gene3D" id="1.10.10.10">
    <property type="entry name" value="Winged helix-like DNA-binding domain superfamily/Winged helix DNA-binding domain"/>
    <property type="match status" value="1"/>
</dbReference>
<dbReference type="HAMAP" id="MF_01285">
    <property type="entry name" value="Riboflavin_kinase"/>
    <property type="match status" value="1"/>
</dbReference>
<dbReference type="InterPro" id="IPR011991">
    <property type="entry name" value="ArsR-like_HTH"/>
</dbReference>
<dbReference type="InterPro" id="IPR039063">
    <property type="entry name" value="RibK_CTP-dep"/>
</dbReference>
<dbReference type="InterPro" id="IPR023470">
    <property type="entry name" value="Riboflavin_kinase_archaeal"/>
</dbReference>
<dbReference type="InterPro" id="IPR023602">
    <property type="entry name" value="Riboflavin_kinase_CTP-dep"/>
</dbReference>
<dbReference type="InterPro" id="IPR023465">
    <property type="entry name" value="Riboflavin_kinase_dom_sf"/>
</dbReference>
<dbReference type="InterPro" id="IPR036388">
    <property type="entry name" value="WH-like_DNA-bd_sf"/>
</dbReference>
<dbReference type="InterPro" id="IPR036390">
    <property type="entry name" value="WH_DNA-bd_sf"/>
</dbReference>
<dbReference type="PANTHER" id="PTHR40706">
    <property type="entry name" value="RIBOFLAVIN KINASE"/>
    <property type="match status" value="1"/>
</dbReference>
<dbReference type="PANTHER" id="PTHR40706:SF1">
    <property type="entry name" value="RIBOFLAVIN KINASE"/>
    <property type="match status" value="1"/>
</dbReference>
<dbReference type="Pfam" id="PF01982">
    <property type="entry name" value="CTP-dep_RFKase"/>
    <property type="match status" value="1"/>
</dbReference>
<dbReference type="SUPFAM" id="SSF82114">
    <property type="entry name" value="Riboflavin kinase-like"/>
    <property type="match status" value="1"/>
</dbReference>
<dbReference type="SUPFAM" id="SSF46785">
    <property type="entry name" value="Winged helix' DNA-binding domain"/>
    <property type="match status" value="1"/>
</dbReference>
<feature type="chain" id="PRO_0000322092" description="Riboflavin kinase">
    <location>
        <begin position="1"/>
        <end position="222"/>
    </location>
</feature>
<feature type="region of interest" description="H-T-H motif-like">
    <location>
        <begin position="1"/>
        <end position="94"/>
    </location>
</feature>
<feature type="region of interest" description="Riboflavin kinase">
    <location>
        <begin position="95"/>
        <end position="222"/>
    </location>
</feature>
<feature type="binding site" evidence="1">
    <location>
        <begin position="104"/>
        <end position="109"/>
    </location>
    <ligand>
        <name>CDP</name>
        <dbReference type="ChEBI" id="CHEBI:58069"/>
    </ligand>
</feature>
<feature type="binding site" evidence="1">
    <location>
        <position position="133"/>
    </location>
    <ligand>
        <name>Mg(2+)</name>
        <dbReference type="ChEBI" id="CHEBI:18420"/>
    </ligand>
</feature>
<feature type="binding site" evidence="1">
    <location>
        <position position="135"/>
    </location>
    <ligand>
        <name>Mg(2+)</name>
        <dbReference type="ChEBI" id="CHEBI:18420"/>
    </ligand>
</feature>
<feature type="binding site" evidence="1">
    <location>
        <position position="190"/>
    </location>
    <ligand>
        <name>FMN</name>
        <dbReference type="ChEBI" id="CHEBI:58210"/>
    </ligand>
</feature>
<feature type="binding site" evidence="1">
    <location>
        <position position="198"/>
    </location>
    <ligand>
        <name>FMN</name>
        <dbReference type="ChEBI" id="CHEBI:58210"/>
    </ligand>
</feature>
<feature type="binding site" evidence="1">
    <location>
        <begin position="203"/>
        <end position="206"/>
    </location>
    <ligand>
        <name>CDP</name>
        <dbReference type="ChEBI" id="CHEBI:58069"/>
    </ligand>
</feature>
<evidence type="ECO:0000250" key="1"/>
<evidence type="ECO:0000305" key="2"/>
<proteinExistence type="inferred from homology"/>
<keyword id="KW-0285">Flavoprotein</keyword>
<keyword id="KW-0288">FMN</keyword>
<keyword id="KW-0418">Kinase</keyword>
<keyword id="KW-0460">Magnesium</keyword>
<keyword id="KW-0479">Metal-binding</keyword>
<keyword id="KW-0547">Nucleotide-binding</keyword>
<keyword id="KW-1185">Reference proteome</keyword>
<keyword id="KW-0808">Transferase</keyword>